<organism>
    <name type="scientific">Synechococcus sp. (strain CC9311)</name>
    <dbReference type="NCBI Taxonomy" id="64471"/>
    <lineage>
        <taxon>Bacteria</taxon>
        <taxon>Bacillati</taxon>
        <taxon>Cyanobacteriota</taxon>
        <taxon>Cyanophyceae</taxon>
        <taxon>Synechococcales</taxon>
        <taxon>Synechococcaceae</taxon>
        <taxon>Synechococcus</taxon>
    </lineage>
</organism>
<comment type="function">
    <text evidence="2">Produces ATP from ADP in the presence of a proton gradient across the membrane. The alpha chain is a regulatory subunit.</text>
</comment>
<comment type="catalytic activity">
    <reaction evidence="2">
        <text>ATP + H2O + 4 H(+)(in) = ADP + phosphate + 5 H(+)(out)</text>
        <dbReference type="Rhea" id="RHEA:57720"/>
        <dbReference type="ChEBI" id="CHEBI:15377"/>
        <dbReference type="ChEBI" id="CHEBI:15378"/>
        <dbReference type="ChEBI" id="CHEBI:30616"/>
        <dbReference type="ChEBI" id="CHEBI:43474"/>
        <dbReference type="ChEBI" id="CHEBI:456216"/>
        <dbReference type="EC" id="7.1.2.2"/>
    </reaction>
</comment>
<comment type="subunit">
    <text evidence="1">F-type ATPases have 2 components, CF(1) - the catalytic core - and CF(0) - the membrane proton channel. CF(1) has five subunits: alpha(3), beta(3), gamma(1), delta(1), epsilon(1). CF(0) has four main subunits: a(1), b(1), b'(1) and c(9-12) (By similarity).</text>
</comment>
<comment type="subcellular location">
    <subcellularLocation>
        <location evidence="2">Cellular thylakoid membrane</location>
        <topology evidence="2">Peripheral membrane protein</topology>
    </subcellularLocation>
</comment>
<comment type="similarity">
    <text evidence="2">Belongs to the ATPase alpha/beta chains family.</text>
</comment>
<proteinExistence type="inferred from homology"/>
<dbReference type="EC" id="7.1.2.2" evidence="2"/>
<dbReference type="EMBL" id="CP000435">
    <property type="protein sequence ID" value="ABI46667.1"/>
    <property type="molecule type" value="Genomic_DNA"/>
</dbReference>
<dbReference type="RefSeq" id="WP_011620222.1">
    <property type="nucleotide sequence ID" value="NC_008319.1"/>
</dbReference>
<dbReference type="SMR" id="Q0I7R2"/>
<dbReference type="STRING" id="64471.sync_2313"/>
<dbReference type="KEGG" id="syg:sync_2313"/>
<dbReference type="eggNOG" id="COG0056">
    <property type="taxonomic scope" value="Bacteria"/>
</dbReference>
<dbReference type="HOGENOM" id="CLU_010091_2_1_3"/>
<dbReference type="OrthoDB" id="9803053at2"/>
<dbReference type="Proteomes" id="UP000001961">
    <property type="component" value="Chromosome"/>
</dbReference>
<dbReference type="GO" id="GO:0031676">
    <property type="term" value="C:plasma membrane-derived thylakoid membrane"/>
    <property type="evidence" value="ECO:0007669"/>
    <property type="project" value="UniProtKB-SubCell"/>
</dbReference>
<dbReference type="GO" id="GO:0045259">
    <property type="term" value="C:proton-transporting ATP synthase complex"/>
    <property type="evidence" value="ECO:0007669"/>
    <property type="project" value="UniProtKB-KW"/>
</dbReference>
<dbReference type="GO" id="GO:0043531">
    <property type="term" value="F:ADP binding"/>
    <property type="evidence" value="ECO:0007669"/>
    <property type="project" value="TreeGrafter"/>
</dbReference>
<dbReference type="GO" id="GO:0005524">
    <property type="term" value="F:ATP binding"/>
    <property type="evidence" value="ECO:0007669"/>
    <property type="project" value="UniProtKB-UniRule"/>
</dbReference>
<dbReference type="GO" id="GO:0046933">
    <property type="term" value="F:proton-transporting ATP synthase activity, rotational mechanism"/>
    <property type="evidence" value="ECO:0007669"/>
    <property type="project" value="UniProtKB-UniRule"/>
</dbReference>
<dbReference type="CDD" id="cd18113">
    <property type="entry name" value="ATP-synt_F1_alpha_C"/>
    <property type="match status" value="1"/>
</dbReference>
<dbReference type="CDD" id="cd18116">
    <property type="entry name" value="ATP-synt_F1_alpha_N"/>
    <property type="match status" value="1"/>
</dbReference>
<dbReference type="CDD" id="cd01132">
    <property type="entry name" value="F1-ATPase_alpha_CD"/>
    <property type="match status" value="1"/>
</dbReference>
<dbReference type="FunFam" id="1.20.150.20:FF:000001">
    <property type="entry name" value="ATP synthase subunit alpha"/>
    <property type="match status" value="1"/>
</dbReference>
<dbReference type="FunFam" id="2.40.30.20:FF:000001">
    <property type="entry name" value="ATP synthase subunit alpha"/>
    <property type="match status" value="1"/>
</dbReference>
<dbReference type="FunFam" id="3.40.50.300:FF:000002">
    <property type="entry name" value="ATP synthase subunit alpha"/>
    <property type="match status" value="1"/>
</dbReference>
<dbReference type="Gene3D" id="2.40.30.20">
    <property type="match status" value="1"/>
</dbReference>
<dbReference type="Gene3D" id="1.20.150.20">
    <property type="entry name" value="ATP synthase alpha/beta chain, C-terminal domain"/>
    <property type="match status" value="1"/>
</dbReference>
<dbReference type="Gene3D" id="3.40.50.300">
    <property type="entry name" value="P-loop containing nucleotide triphosphate hydrolases"/>
    <property type="match status" value="1"/>
</dbReference>
<dbReference type="HAMAP" id="MF_01346">
    <property type="entry name" value="ATP_synth_alpha_bact"/>
    <property type="match status" value="1"/>
</dbReference>
<dbReference type="InterPro" id="IPR023366">
    <property type="entry name" value="ATP_synth_asu-like_sf"/>
</dbReference>
<dbReference type="InterPro" id="IPR000793">
    <property type="entry name" value="ATP_synth_asu_C"/>
</dbReference>
<dbReference type="InterPro" id="IPR038376">
    <property type="entry name" value="ATP_synth_asu_C_sf"/>
</dbReference>
<dbReference type="InterPro" id="IPR033732">
    <property type="entry name" value="ATP_synth_F1_a_nt-bd_dom"/>
</dbReference>
<dbReference type="InterPro" id="IPR005294">
    <property type="entry name" value="ATP_synth_F1_asu"/>
</dbReference>
<dbReference type="InterPro" id="IPR020003">
    <property type="entry name" value="ATPase_a/bsu_AS"/>
</dbReference>
<dbReference type="InterPro" id="IPR004100">
    <property type="entry name" value="ATPase_F1/V1/A1_a/bsu_N"/>
</dbReference>
<dbReference type="InterPro" id="IPR036121">
    <property type="entry name" value="ATPase_F1/V1/A1_a/bsu_N_sf"/>
</dbReference>
<dbReference type="InterPro" id="IPR000194">
    <property type="entry name" value="ATPase_F1/V1/A1_a/bsu_nucl-bd"/>
</dbReference>
<dbReference type="InterPro" id="IPR027417">
    <property type="entry name" value="P-loop_NTPase"/>
</dbReference>
<dbReference type="NCBIfam" id="TIGR00962">
    <property type="entry name" value="atpA"/>
    <property type="match status" value="1"/>
</dbReference>
<dbReference type="NCBIfam" id="NF009884">
    <property type="entry name" value="PRK13343.1"/>
    <property type="match status" value="1"/>
</dbReference>
<dbReference type="PANTHER" id="PTHR48082">
    <property type="entry name" value="ATP SYNTHASE SUBUNIT ALPHA, MITOCHONDRIAL"/>
    <property type="match status" value="1"/>
</dbReference>
<dbReference type="PANTHER" id="PTHR48082:SF2">
    <property type="entry name" value="ATP SYNTHASE SUBUNIT ALPHA, MITOCHONDRIAL"/>
    <property type="match status" value="1"/>
</dbReference>
<dbReference type="Pfam" id="PF00006">
    <property type="entry name" value="ATP-synt_ab"/>
    <property type="match status" value="1"/>
</dbReference>
<dbReference type="Pfam" id="PF00306">
    <property type="entry name" value="ATP-synt_ab_C"/>
    <property type="match status" value="1"/>
</dbReference>
<dbReference type="Pfam" id="PF02874">
    <property type="entry name" value="ATP-synt_ab_N"/>
    <property type="match status" value="1"/>
</dbReference>
<dbReference type="PIRSF" id="PIRSF039088">
    <property type="entry name" value="F_ATPase_subunit_alpha"/>
    <property type="match status" value="1"/>
</dbReference>
<dbReference type="SUPFAM" id="SSF47917">
    <property type="entry name" value="C-terminal domain of alpha and beta subunits of F1 ATP synthase"/>
    <property type="match status" value="1"/>
</dbReference>
<dbReference type="SUPFAM" id="SSF50615">
    <property type="entry name" value="N-terminal domain of alpha and beta subunits of F1 ATP synthase"/>
    <property type="match status" value="1"/>
</dbReference>
<dbReference type="SUPFAM" id="SSF52540">
    <property type="entry name" value="P-loop containing nucleoside triphosphate hydrolases"/>
    <property type="match status" value="1"/>
</dbReference>
<dbReference type="PROSITE" id="PS00152">
    <property type="entry name" value="ATPASE_ALPHA_BETA"/>
    <property type="match status" value="1"/>
</dbReference>
<keyword id="KW-0066">ATP synthesis</keyword>
<keyword id="KW-0067">ATP-binding</keyword>
<keyword id="KW-0139">CF(1)</keyword>
<keyword id="KW-0375">Hydrogen ion transport</keyword>
<keyword id="KW-0406">Ion transport</keyword>
<keyword id="KW-0472">Membrane</keyword>
<keyword id="KW-0547">Nucleotide-binding</keyword>
<keyword id="KW-1185">Reference proteome</keyword>
<keyword id="KW-0793">Thylakoid</keyword>
<keyword id="KW-1278">Translocase</keyword>
<keyword id="KW-0813">Transport</keyword>
<reference key="1">
    <citation type="journal article" date="2006" name="Proc. Natl. Acad. Sci. U.S.A.">
        <title>Genome sequence of Synechococcus CC9311: insights into adaptation to a coastal environment.</title>
        <authorList>
            <person name="Palenik B."/>
            <person name="Ren Q."/>
            <person name="Dupont C.L."/>
            <person name="Myers G.S."/>
            <person name="Heidelberg J.F."/>
            <person name="Badger J.H."/>
            <person name="Madupu R."/>
            <person name="Nelson W.C."/>
            <person name="Brinkac L.M."/>
            <person name="Dodson R.J."/>
            <person name="Durkin A.S."/>
            <person name="Daugherty S.C."/>
            <person name="Sullivan S.A."/>
            <person name="Khouri H."/>
            <person name="Mohamoud Y."/>
            <person name="Halpin R."/>
            <person name="Paulsen I.T."/>
        </authorList>
    </citation>
    <scope>NUCLEOTIDE SEQUENCE [LARGE SCALE GENOMIC DNA]</scope>
    <source>
        <strain>CC9311</strain>
    </source>
</reference>
<protein>
    <recommendedName>
        <fullName evidence="2">ATP synthase subunit alpha</fullName>
        <ecNumber evidence="2">7.1.2.2</ecNumber>
    </recommendedName>
    <alternativeName>
        <fullName evidence="2">ATP synthase F1 sector subunit alpha</fullName>
    </alternativeName>
    <alternativeName>
        <fullName evidence="2">F-ATPase subunit alpha</fullName>
    </alternativeName>
</protein>
<gene>
    <name evidence="2" type="primary">atpA</name>
    <name type="ordered locus">sync_2313</name>
</gene>
<sequence>MVSIRPDEISAILKQQIEDYDKSVSVTNVGTVLQVGDGIARVYGLQQVMAGELVEFEDGTEGIALNLEDDNVGIVLMGEGLGIQEGSTVRATGKIASVPVGDAMLGRVVNPLGVAIDGKGDLATTESRLIESPAPGIIQRKSVHEPMQTGITAIDAMIPIGRGQRELIIGDRQTGKTAICIDTILNQADQDVVCVYVAIGQKAASVAQVTEVLRERGALDYTVVVAANASEPAALQYLAPYTGASIAEYFMYKGKATLVIYDDLTKQAQAYRQMSLLLRRPPGREAYPGDVFYCHSRLLERAAKLSDAMGKGSMTALPIIETQAGDVSAYIPTNVISITDGQVFLSSDLFNSGLRPAINVGISVSRVGGAAQTKAIKKIAGTLKLELAQFDELAAFSQFASDLDAATQQQLSRGKRLRELLKQPQFSPLILAEQVAIVYAGVKGLIDDVPVEEVVQFSRELREYLKSNKPEFISKIQTEKVLSPEAETTLKEAIAEVVSTMLASAN</sequence>
<name>ATPA_SYNS3</name>
<feature type="chain" id="PRO_0000302708" description="ATP synthase subunit alpha">
    <location>
        <begin position="1"/>
        <end position="506"/>
    </location>
</feature>
<feature type="binding site" evidence="2">
    <location>
        <begin position="170"/>
        <end position="177"/>
    </location>
    <ligand>
        <name>ATP</name>
        <dbReference type="ChEBI" id="CHEBI:30616"/>
    </ligand>
</feature>
<feature type="site" description="Required for activity" evidence="2">
    <location>
        <position position="363"/>
    </location>
</feature>
<evidence type="ECO:0000250" key="1"/>
<evidence type="ECO:0000255" key="2">
    <source>
        <dbReference type="HAMAP-Rule" id="MF_01346"/>
    </source>
</evidence>
<accession>Q0I7R2</accession>